<organism>
    <name type="scientific">Xanthomonas oryzae pv. oryzae (strain PXO99A)</name>
    <dbReference type="NCBI Taxonomy" id="360094"/>
    <lineage>
        <taxon>Bacteria</taxon>
        <taxon>Pseudomonadati</taxon>
        <taxon>Pseudomonadota</taxon>
        <taxon>Gammaproteobacteria</taxon>
        <taxon>Lysobacterales</taxon>
        <taxon>Lysobacteraceae</taxon>
        <taxon>Xanthomonas</taxon>
    </lineage>
</organism>
<comment type="function">
    <text evidence="1">One of the primary rRNA binding proteins, it binds directly to 16S rRNA where it nucleates assembly of the head domain of the 30S subunit. Is located at the subunit interface close to the decoding center, probably blocks exit of the E-site tRNA.</text>
</comment>
<comment type="subunit">
    <text evidence="1">Part of the 30S ribosomal subunit. Contacts proteins S9 and S11.</text>
</comment>
<comment type="similarity">
    <text evidence="1">Belongs to the universal ribosomal protein uS7 family.</text>
</comment>
<evidence type="ECO:0000255" key="1">
    <source>
        <dbReference type="HAMAP-Rule" id="MF_00480"/>
    </source>
</evidence>
<evidence type="ECO:0000305" key="2"/>
<dbReference type="EMBL" id="CP000967">
    <property type="protein sequence ID" value="ACD57881.1"/>
    <property type="molecule type" value="Genomic_DNA"/>
</dbReference>
<dbReference type="RefSeq" id="WP_011260032.1">
    <property type="nucleotide sequence ID" value="NC_010717.2"/>
</dbReference>
<dbReference type="SMR" id="B2SQQ4"/>
<dbReference type="GeneID" id="93986251"/>
<dbReference type="KEGG" id="xop:PXO_04527"/>
<dbReference type="eggNOG" id="COG0049">
    <property type="taxonomic scope" value="Bacteria"/>
</dbReference>
<dbReference type="HOGENOM" id="CLU_072226_1_1_6"/>
<dbReference type="Proteomes" id="UP000001740">
    <property type="component" value="Chromosome"/>
</dbReference>
<dbReference type="GO" id="GO:0015935">
    <property type="term" value="C:small ribosomal subunit"/>
    <property type="evidence" value="ECO:0007669"/>
    <property type="project" value="InterPro"/>
</dbReference>
<dbReference type="GO" id="GO:0019843">
    <property type="term" value="F:rRNA binding"/>
    <property type="evidence" value="ECO:0007669"/>
    <property type="project" value="UniProtKB-UniRule"/>
</dbReference>
<dbReference type="GO" id="GO:0003735">
    <property type="term" value="F:structural constituent of ribosome"/>
    <property type="evidence" value="ECO:0007669"/>
    <property type="project" value="InterPro"/>
</dbReference>
<dbReference type="GO" id="GO:0000049">
    <property type="term" value="F:tRNA binding"/>
    <property type="evidence" value="ECO:0007669"/>
    <property type="project" value="UniProtKB-UniRule"/>
</dbReference>
<dbReference type="GO" id="GO:0006412">
    <property type="term" value="P:translation"/>
    <property type="evidence" value="ECO:0007669"/>
    <property type="project" value="UniProtKB-UniRule"/>
</dbReference>
<dbReference type="CDD" id="cd14869">
    <property type="entry name" value="uS7_Bacteria"/>
    <property type="match status" value="1"/>
</dbReference>
<dbReference type="FunFam" id="1.10.455.10:FF:000001">
    <property type="entry name" value="30S ribosomal protein S7"/>
    <property type="match status" value="1"/>
</dbReference>
<dbReference type="Gene3D" id="1.10.455.10">
    <property type="entry name" value="Ribosomal protein S7 domain"/>
    <property type="match status" value="1"/>
</dbReference>
<dbReference type="HAMAP" id="MF_00480_B">
    <property type="entry name" value="Ribosomal_uS7_B"/>
    <property type="match status" value="1"/>
</dbReference>
<dbReference type="InterPro" id="IPR000235">
    <property type="entry name" value="Ribosomal_uS7"/>
</dbReference>
<dbReference type="InterPro" id="IPR005717">
    <property type="entry name" value="Ribosomal_uS7_bac/org-type"/>
</dbReference>
<dbReference type="InterPro" id="IPR020606">
    <property type="entry name" value="Ribosomal_uS7_CS"/>
</dbReference>
<dbReference type="InterPro" id="IPR023798">
    <property type="entry name" value="Ribosomal_uS7_dom"/>
</dbReference>
<dbReference type="InterPro" id="IPR036823">
    <property type="entry name" value="Ribosomal_uS7_dom_sf"/>
</dbReference>
<dbReference type="NCBIfam" id="TIGR01029">
    <property type="entry name" value="rpsG_bact"/>
    <property type="match status" value="1"/>
</dbReference>
<dbReference type="PANTHER" id="PTHR11205">
    <property type="entry name" value="RIBOSOMAL PROTEIN S7"/>
    <property type="match status" value="1"/>
</dbReference>
<dbReference type="Pfam" id="PF00177">
    <property type="entry name" value="Ribosomal_S7"/>
    <property type="match status" value="1"/>
</dbReference>
<dbReference type="PIRSF" id="PIRSF002122">
    <property type="entry name" value="RPS7p_RPS7a_RPS5e_RPS7o"/>
    <property type="match status" value="1"/>
</dbReference>
<dbReference type="SUPFAM" id="SSF47973">
    <property type="entry name" value="Ribosomal protein S7"/>
    <property type="match status" value="1"/>
</dbReference>
<dbReference type="PROSITE" id="PS00052">
    <property type="entry name" value="RIBOSOMAL_S7"/>
    <property type="match status" value="1"/>
</dbReference>
<sequence length="155" mass="17258">MSRKGSTPQRTVLPDPKHGSETIARFINMVMQSGKKSVAEKIVYGAMDVIGEKNPNAIELVQKALDNVAPAVEVKSRRVGGATYQVPVEVRSSRRMALAMRWLIDSARKRGENTMPRKLAAELLDAAESRGGAIKKREETHRMAEANKAFAHYRW</sequence>
<name>RS7_XANOP</name>
<feature type="chain" id="PRO_1000126026" description="Small ribosomal subunit protein uS7">
    <location>
        <begin position="1"/>
        <end position="155"/>
    </location>
</feature>
<proteinExistence type="inferred from homology"/>
<gene>
    <name evidence="1" type="primary">rpsG</name>
    <name type="ordered locus">PXO_04527</name>
</gene>
<reference key="1">
    <citation type="journal article" date="2008" name="BMC Genomics">
        <title>Genome sequence and rapid evolution of the rice pathogen Xanthomonas oryzae pv. oryzae PXO99A.</title>
        <authorList>
            <person name="Salzberg S.L."/>
            <person name="Sommer D.D."/>
            <person name="Schatz M.C."/>
            <person name="Phillippy A.M."/>
            <person name="Rabinowicz P.D."/>
            <person name="Tsuge S."/>
            <person name="Furutani A."/>
            <person name="Ochiai H."/>
            <person name="Delcher A.L."/>
            <person name="Kelley D."/>
            <person name="Madupu R."/>
            <person name="Puiu D."/>
            <person name="Radune D."/>
            <person name="Shumway M."/>
            <person name="Trapnell C."/>
            <person name="Aparna G."/>
            <person name="Jha G."/>
            <person name="Pandey A."/>
            <person name="Patil P.B."/>
            <person name="Ishihara H."/>
            <person name="Meyer D.F."/>
            <person name="Szurek B."/>
            <person name="Verdier V."/>
            <person name="Koebnik R."/>
            <person name="Dow J.M."/>
            <person name="Ryan R.P."/>
            <person name="Hirata H."/>
            <person name="Tsuyumu S."/>
            <person name="Won Lee S."/>
            <person name="Seo Y.-S."/>
            <person name="Sriariyanum M."/>
            <person name="Ronald P.C."/>
            <person name="Sonti R.V."/>
            <person name="Van Sluys M.-A."/>
            <person name="Leach J.E."/>
            <person name="White F.F."/>
            <person name="Bogdanove A.J."/>
        </authorList>
    </citation>
    <scope>NUCLEOTIDE SEQUENCE [LARGE SCALE GENOMIC DNA]</scope>
    <source>
        <strain>PXO99A</strain>
    </source>
</reference>
<protein>
    <recommendedName>
        <fullName evidence="1">Small ribosomal subunit protein uS7</fullName>
    </recommendedName>
    <alternativeName>
        <fullName evidence="2">30S ribosomal protein S7</fullName>
    </alternativeName>
</protein>
<keyword id="KW-0687">Ribonucleoprotein</keyword>
<keyword id="KW-0689">Ribosomal protein</keyword>
<keyword id="KW-0694">RNA-binding</keyword>
<keyword id="KW-0699">rRNA-binding</keyword>
<keyword id="KW-0820">tRNA-binding</keyword>
<accession>B2SQQ4</accession>